<evidence type="ECO:0000255" key="1">
    <source>
        <dbReference type="HAMAP-Rule" id="MF_00454"/>
    </source>
</evidence>
<keyword id="KW-0997">Cell inner membrane</keyword>
<keyword id="KW-1003">Cell membrane</keyword>
<keyword id="KW-0407">Ion channel</keyword>
<keyword id="KW-0406">Ion transport</keyword>
<keyword id="KW-0472">Membrane</keyword>
<keyword id="KW-0479">Metal-binding</keyword>
<keyword id="KW-0915">Sodium</keyword>
<keyword id="KW-0812">Transmembrane</keyword>
<keyword id="KW-1133">Transmembrane helix</keyword>
<keyword id="KW-0813">Transport</keyword>
<gene>
    <name evidence="1" type="primary">fluC</name>
    <name evidence="1" type="synonym">crcB</name>
    <name type="ordered locus">Bpet3166</name>
</gene>
<dbReference type="EMBL" id="AM902716">
    <property type="protein sequence ID" value="CAP43508.1"/>
    <property type="molecule type" value="Genomic_DNA"/>
</dbReference>
<dbReference type="SMR" id="A9IU75"/>
<dbReference type="STRING" id="94624.Bpet3166"/>
<dbReference type="KEGG" id="bpt:Bpet3166"/>
<dbReference type="eggNOG" id="COG0239">
    <property type="taxonomic scope" value="Bacteria"/>
</dbReference>
<dbReference type="Proteomes" id="UP000001225">
    <property type="component" value="Chromosome"/>
</dbReference>
<dbReference type="GO" id="GO:0005886">
    <property type="term" value="C:plasma membrane"/>
    <property type="evidence" value="ECO:0007669"/>
    <property type="project" value="UniProtKB-SubCell"/>
</dbReference>
<dbReference type="GO" id="GO:0062054">
    <property type="term" value="F:fluoride channel activity"/>
    <property type="evidence" value="ECO:0007669"/>
    <property type="project" value="UniProtKB-UniRule"/>
</dbReference>
<dbReference type="GO" id="GO:0046872">
    <property type="term" value="F:metal ion binding"/>
    <property type="evidence" value="ECO:0007669"/>
    <property type="project" value="UniProtKB-KW"/>
</dbReference>
<dbReference type="GO" id="GO:0140114">
    <property type="term" value="P:cellular detoxification of fluoride"/>
    <property type="evidence" value="ECO:0007669"/>
    <property type="project" value="UniProtKB-UniRule"/>
</dbReference>
<dbReference type="HAMAP" id="MF_00454">
    <property type="entry name" value="FluC"/>
    <property type="match status" value="1"/>
</dbReference>
<dbReference type="InterPro" id="IPR003691">
    <property type="entry name" value="FluC"/>
</dbReference>
<dbReference type="NCBIfam" id="TIGR00494">
    <property type="entry name" value="crcB"/>
    <property type="match status" value="1"/>
</dbReference>
<dbReference type="NCBIfam" id="NF010792">
    <property type="entry name" value="PRK14196.1"/>
    <property type="match status" value="1"/>
</dbReference>
<dbReference type="PANTHER" id="PTHR28259">
    <property type="entry name" value="FLUORIDE EXPORT PROTEIN 1-RELATED"/>
    <property type="match status" value="1"/>
</dbReference>
<dbReference type="PANTHER" id="PTHR28259:SF1">
    <property type="entry name" value="FLUORIDE EXPORT PROTEIN 1-RELATED"/>
    <property type="match status" value="1"/>
</dbReference>
<dbReference type="Pfam" id="PF02537">
    <property type="entry name" value="CRCB"/>
    <property type="match status" value="1"/>
</dbReference>
<proteinExistence type="inferred from homology"/>
<feature type="chain" id="PRO_1000135314" description="Fluoride-specific ion channel FluC">
    <location>
        <begin position="1"/>
        <end position="128"/>
    </location>
</feature>
<feature type="transmembrane region" description="Helical" evidence="1">
    <location>
        <begin position="10"/>
        <end position="30"/>
    </location>
</feature>
<feature type="transmembrane region" description="Helical" evidence="1">
    <location>
        <begin position="40"/>
        <end position="60"/>
    </location>
</feature>
<feature type="transmembrane region" description="Helical" evidence="1">
    <location>
        <begin position="71"/>
        <end position="91"/>
    </location>
</feature>
<feature type="transmembrane region" description="Helical" evidence="1">
    <location>
        <begin position="102"/>
        <end position="122"/>
    </location>
</feature>
<feature type="binding site" evidence="1">
    <location>
        <position position="78"/>
    </location>
    <ligand>
        <name>Na(+)</name>
        <dbReference type="ChEBI" id="CHEBI:29101"/>
        <note>structural</note>
    </ligand>
</feature>
<feature type="binding site" evidence="1">
    <location>
        <position position="81"/>
    </location>
    <ligand>
        <name>Na(+)</name>
        <dbReference type="ChEBI" id="CHEBI:29101"/>
        <note>structural</note>
    </ligand>
</feature>
<reference key="1">
    <citation type="journal article" date="2008" name="BMC Genomics">
        <title>The missing link: Bordetella petrii is endowed with both the metabolic versatility of environmental bacteria and virulence traits of pathogenic Bordetellae.</title>
        <authorList>
            <person name="Gross R."/>
            <person name="Guzman C.A."/>
            <person name="Sebaihia M."/>
            <person name="Martin dos Santos V.A.P."/>
            <person name="Pieper D.H."/>
            <person name="Koebnik R."/>
            <person name="Lechner M."/>
            <person name="Bartels D."/>
            <person name="Buhrmester J."/>
            <person name="Choudhuri J.V."/>
            <person name="Ebensen T."/>
            <person name="Gaigalat L."/>
            <person name="Herrmann S."/>
            <person name="Khachane A.N."/>
            <person name="Larisch C."/>
            <person name="Link S."/>
            <person name="Linke B."/>
            <person name="Meyer F."/>
            <person name="Mormann S."/>
            <person name="Nakunst D."/>
            <person name="Rueckert C."/>
            <person name="Schneiker-Bekel S."/>
            <person name="Schulze K."/>
            <person name="Voerholter F.-J."/>
            <person name="Yevsa T."/>
            <person name="Engle J.T."/>
            <person name="Goldman W.E."/>
            <person name="Puehler A."/>
            <person name="Goebel U.B."/>
            <person name="Goesmann A."/>
            <person name="Bloecker H."/>
            <person name="Kaiser O."/>
            <person name="Martinez-Arias R."/>
        </authorList>
    </citation>
    <scope>NUCLEOTIDE SEQUENCE [LARGE SCALE GENOMIC DNA]</scope>
    <source>
        <strain>ATCC BAA-461 / DSM 12804 / CCUG 43448</strain>
    </source>
</reference>
<comment type="function">
    <text evidence="1">Fluoride-specific ion channel. Important for reducing fluoride concentration in the cell, thus reducing its toxicity.</text>
</comment>
<comment type="catalytic activity">
    <reaction evidence="1">
        <text>fluoride(in) = fluoride(out)</text>
        <dbReference type="Rhea" id="RHEA:76159"/>
        <dbReference type="ChEBI" id="CHEBI:17051"/>
    </reaction>
    <physiologicalReaction direction="left-to-right" evidence="1">
        <dbReference type="Rhea" id="RHEA:76160"/>
    </physiologicalReaction>
</comment>
<comment type="activity regulation">
    <text evidence="1">Na(+) is not transported, but it plays an essential structural role and its presence is essential for fluoride channel function.</text>
</comment>
<comment type="subcellular location">
    <subcellularLocation>
        <location evidence="1">Cell inner membrane</location>
        <topology evidence="1">Multi-pass membrane protein</topology>
    </subcellularLocation>
</comment>
<comment type="similarity">
    <text evidence="1">Belongs to the fluoride channel Fluc/FEX (TC 1.A.43) family.</text>
</comment>
<sequence>MTQTLIPLNFLAVAIGAALGACARWLAGLWLNSSAWPWGTLLVNLAGGYLIGLALAVLLAHPEWPQWIRLAAVTGFLGGLTTFSTFSAETVGMLERGAYATALGYAALSLVGSLALTALGLASAHALR</sequence>
<organism>
    <name type="scientific">Bordetella petrii (strain ATCC BAA-461 / DSM 12804 / CCUG 43448)</name>
    <dbReference type="NCBI Taxonomy" id="340100"/>
    <lineage>
        <taxon>Bacteria</taxon>
        <taxon>Pseudomonadati</taxon>
        <taxon>Pseudomonadota</taxon>
        <taxon>Betaproteobacteria</taxon>
        <taxon>Burkholderiales</taxon>
        <taxon>Alcaligenaceae</taxon>
        <taxon>Bordetella</taxon>
    </lineage>
</organism>
<name>FLUC_BORPD</name>
<protein>
    <recommendedName>
        <fullName evidence="1">Fluoride-specific ion channel FluC</fullName>
    </recommendedName>
</protein>
<accession>A9IU75</accession>